<evidence type="ECO:0000255" key="1">
    <source>
        <dbReference type="PROSITE-ProRule" id="PRU00108"/>
    </source>
</evidence>
<evidence type="ECO:0000255" key="2">
    <source>
        <dbReference type="PROSITE-ProRule" id="PRU00138"/>
    </source>
</evidence>
<evidence type="ECO:0000256" key="3">
    <source>
        <dbReference type="SAM" id="MobiDB-lite"/>
    </source>
</evidence>
<evidence type="ECO:0000269" key="4">
    <source>
    </source>
</evidence>
<evidence type="ECO:0000303" key="5">
    <source ref="4"/>
</evidence>
<evidence type="ECO:0000305" key="6"/>
<dbReference type="EMBL" id="AE013599">
    <property type="protein sequence ID" value="AAS64751.3"/>
    <property type="molecule type" value="Genomic_DNA"/>
</dbReference>
<dbReference type="EMBL" id="AE013599">
    <property type="protein sequence ID" value="ABI31108.1"/>
    <property type="molecule type" value="Genomic_DNA"/>
</dbReference>
<dbReference type="EMBL" id="BT023887">
    <property type="protein sequence ID" value="ABA81821.1"/>
    <property type="molecule type" value="mRNA"/>
</dbReference>
<dbReference type="EMBL" id="BT030422">
    <property type="protein sequence ID" value="ABO52842.1"/>
    <property type="molecule type" value="mRNA"/>
</dbReference>
<dbReference type="RefSeq" id="NP_001036563.1">
    <molecule id="P56672-3"/>
    <property type="nucleotide sequence ID" value="NM_001043098.2"/>
</dbReference>
<dbReference type="RefSeq" id="NP_001097388.2">
    <molecule id="P56672-5"/>
    <property type="nucleotide sequence ID" value="NM_001103918.3"/>
</dbReference>
<dbReference type="SMR" id="P56672"/>
<dbReference type="BioGRID" id="63008">
    <property type="interactions" value="49"/>
</dbReference>
<dbReference type="DIP" id="DIP-17198N"/>
<dbReference type="IntAct" id="P56672">
    <property type="interactions" value="40"/>
</dbReference>
<dbReference type="STRING" id="7227.FBpp0309637"/>
<dbReference type="GlyGen" id="P56672">
    <property type="glycosylation" value="2 sites"/>
</dbReference>
<dbReference type="PaxDb" id="7227-FBpp0288728"/>
<dbReference type="DNASU" id="37364"/>
<dbReference type="EnsemblMetazoa" id="FBtr0110772">
    <molecule id="P56672-3"/>
    <property type="protein sequence ID" value="FBpp0110069"/>
    <property type="gene ID" value="FBgn0015524"/>
</dbReference>
<dbReference type="EnsemblMetazoa" id="FBtr0290289">
    <molecule id="P56672-5"/>
    <property type="protein sequence ID" value="FBpp0288728"/>
    <property type="gene ID" value="FBgn0015524"/>
</dbReference>
<dbReference type="GeneID" id="37364"/>
<dbReference type="KEGG" id="dme:Dmel_CG10036"/>
<dbReference type="UCSC" id="CG10036-RC">
    <molecule id="P56672-5"/>
    <property type="organism name" value="d. melanogaster"/>
</dbReference>
<dbReference type="AGR" id="FB:FBgn0015524"/>
<dbReference type="CTD" id="23440"/>
<dbReference type="FlyBase" id="FBgn0015524">
    <property type="gene designation" value="otp"/>
</dbReference>
<dbReference type="VEuPathDB" id="VectorBase:FBgn0015524"/>
<dbReference type="eggNOG" id="KOG0490">
    <property type="taxonomic scope" value="Eukaryota"/>
</dbReference>
<dbReference type="GeneTree" id="ENSGT00940000170167"/>
<dbReference type="InParanoid" id="P56672"/>
<dbReference type="OrthoDB" id="6159439at2759"/>
<dbReference type="PhylomeDB" id="P56672"/>
<dbReference type="BioGRID-ORCS" id="37364">
    <property type="hits" value="0 hits in 1 CRISPR screen"/>
</dbReference>
<dbReference type="ChiTaRS" id="otp">
    <property type="organism name" value="fly"/>
</dbReference>
<dbReference type="GenomeRNAi" id="37364"/>
<dbReference type="PRO" id="PR:P56672"/>
<dbReference type="Proteomes" id="UP000000803">
    <property type="component" value="Chromosome 2R"/>
</dbReference>
<dbReference type="Bgee" id="FBgn0015524">
    <property type="expression patterns" value="Expressed in adult olfactory projection neuron in brain and 27 other cell types or tissues"/>
</dbReference>
<dbReference type="ExpressionAtlas" id="P56672">
    <property type="expression patterns" value="baseline and differential"/>
</dbReference>
<dbReference type="GO" id="GO:0005634">
    <property type="term" value="C:nucleus"/>
    <property type="evidence" value="ECO:0007669"/>
    <property type="project" value="UniProtKB-SubCell"/>
</dbReference>
<dbReference type="GO" id="GO:0003677">
    <property type="term" value="F:DNA binding"/>
    <property type="evidence" value="ECO:0000314"/>
    <property type="project" value="FlyBase"/>
</dbReference>
<dbReference type="GO" id="GO:0000981">
    <property type="term" value="F:DNA-binding transcription factor activity, RNA polymerase II-specific"/>
    <property type="evidence" value="ECO:0007669"/>
    <property type="project" value="InterPro"/>
</dbReference>
<dbReference type="GO" id="GO:0030182">
    <property type="term" value="P:neuron differentiation"/>
    <property type="evidence" value="ECO:0000318"/>
    <property type="project" value="GO_Central"/>
</dbReference>
<dbReference type="CDD" id="cd00086">
    <property type="entry name" value="homeodomain"/>
    <property type="match status" value="1"/>
</dbReference>
<dbReference type="FunFam" id="1.10.10.60:FF:000400">
    <property type="entry name" value="Orthopedia, isoform H"/>
    <property type="match status" value="1"/>
</dbReference>
<dbReference type="Gene3D" id="1.10.10.60">
    <property type="entry name" value="Homeodomain-like"/>
    <property type="match status" value="1"/>
</dbReference>
<dbReference type="InterPro" id="IPR001356">
    <property type="entry name" value="HD"/>
</dbReference>
<dbReference type="InterPro" id="IPR017970">
    <property type="entry name" value="Homeobox_CS"/>
</dbReference>
<dbReference type="InterPro" id="IPR009057">
    <property type="entry name" value="Homeodomain-like_sf"/>
</dbReference>
<dbReference type="InterPro" id="IPR000047">
    <property type="entry name" value="HTH_motif"/>
</dbReference>
<dbReference type="InterPro" id="IPR003654">
    <property type="entry name" value="OAR_dom"/>
</dbReference>
<dbReference type="InterPro" id="IPR051895">
    <property type="entry name" value="OTP_Homeobox"/>
</dbReference>
<dbReference type="PANTHER" id="PTHR46770">
    <property type="entry name" value="HOMEOBOX PROTEIN ORTHOPEDIA"/>
    <property type="match status" value="1"/>
</dbReference>
<dbReference type="PANTHER" id="PTHR46770:SF1">
    <property type="entry name" value="HOMEOBOX PROTEIN ORTHOPEDIA"/>
    <property type="match status" value="1"/>
</dbReference>
<dbReference type="Pfam" id="PF00046">
    <property type="entry name" value="Homeodomain"/>
    <property type="match status" value="1"/>
</dbReference>
<dbReference type="PRINTS" id="PR00031">
    <property type="entry name" value="HTHREPRESSR"/>
</dbReference>
<dbReference type="SMART" id="SM00389">
    <property type="entry name" value="HOX"/>
    <property type="match status" value="1"/>
</dbReference>
<dbReference type="SUPFAM" id="SSF46689">
    <property type="entry name" value="Homeodomain-like"/>
    <property type="match status" value="1"/>
</dbReference>
<dbReference type="PROSITE" id="PS00027">
    <property type="entry name" value="HOMEOBOX_1"/>
    <property type="match status" value="1"/>
</dbReference>
<dbReference type="PROSITE" id="PS50071">
    <property type="entry name" value="HOMEOBOX_2"/>
    <property type="match status" value="1"/>
</dbReference>
<dbReference type="PROSITE" id="PS50803">
    <property type="entry name" value="OAR"/>
    <property type="match status" value="1"/>
</dbReference>
<organism>
    <name type="scientific">Drosophila melanogaster</name>
    <name type="common">Fruit fly</name>
    <dbReference type="NCBI Taxonomy" id="7227"/>
    <lineage>
        <taxon>Eukaryota</taxon>
        <taxon>Metazoa</taxon>
        <taxon>Ecdysozoa</taxon>
        <taxon>Arthropoda</taxon>
        <taxon>Hexapoda</taxon>
        <taxon>Insecta</taxon>
        <taxon>Pterygota</taxon>
        <taxon>Neoptera</taxon>
        <taxon>Endopterygota</taxon>
        <taxon>Diptera</taxon>
        <taxon>Brachycera</taxon>
        <taxon>Muscomorpha</taxon>
        <taxon>Ephydroidea</taxon>
        <taxon>Drosophilidae</taxon>
        <taxon>Drosophila</taxon>
        <taxon>Sophophora</taxon>
    </lineage>
</organism>
<accession>P56672</accession>
<accession>A4IJ64</accession>
<accession>Q3KN52</accession>
<accession>Q7KVQ3</accession>
<accession>Q9W2Q4</accession>
<reference key="1">
    <citation type="journal article" date="1994" name="Neuron">
        <title>Orthopedia, a novel homeobox-containing gene expressed in the developing CNS of both mouse and Drosophila.</title>
        <authorList>
            <person name="Simeone A."/>
            <person name="D'Apice M.R."/>
            <person name="Nigro V."/>
            <person name="Casanova J."/>
            <person name="Graziani F."/>
            <person name="Acampora D."/>
            <person name="Avantaggiato V."/>
        </authorList>
    </citation>
    <scope>NUCLEOTIDE SEQUENCE [GENOMIC DNA] (ISOFORM C)</scope>
    <scope>FUNCTION</scope>
    <scope>TISSUE SPECIFICITY</scope>
</reference>
<reference key="2">
    <citation type="journal article" date="2000" name="Science">
        <title>The genome sequence of Drosophila melanogaster.</title>
        <authorList>
            <person name="Adams M.D."/>
            <person name="Celniker S.E."/>
            <person name="Holt R.A."/>
            <person name="Evans C.A."/>
            <person name="Gocayne J.D."/>
            <person name="Amanatides P.G."/>
            <person name="Scherer S.E."/>
            <person name="Li P.W."/>
            <person name="Hoskins R.A."/>
            <person name="Galle R.F."/>
            <person name="George R.A."/>
            <person name="Lewis S.E."/>
            <person name="Richards S."/>
            <person name="Ashburner M."/>
            <person name="Henderson S.N."/>
            <person name="Sutton G.G."/>
            <person name="Wortman J.R."/>
            <person name="Yandell M.D."/>
            <person name="Zhang Q."/>
            <person name="Chen L.X."/>
            <person name="Brandon R.C."/>
            <person name="Rogers Y.-H.C."/>
            <person name="Blazej R.G."/>
            <person name="Champe M."/>
            <person name="Pfeiffer B.D."/>
            <person name="Wan K.H."/>
            <person name="Doyle C."/>
            <person name="Baxter E.G."/>
            <person name="Helt G."/>
            <person name="Nelson C.R."/>
            <person name="Miklos G.L.G."/>
            <person name="Abril J.F."/>
            <person name="Agbayani A."/>
            <person name="An H.-J."/>
            <person name="Andrews-Pfannkoch C."/>
            <person name="Baldwin D."/>
            <person name="Ballew R.M."/>
            <person name="Basu A."/>
            <person name="Baxendale J."/>
            <person name="Bayraktaroglu L."/>
            <person name="Beasley E.M."/>
            <person name="Beeson K.Y."/>
            <person name="Benos P.V."/>
            <person name="Berman B.P."/>
            <person name="Bhandari D."/>
            <person name="Bolshakov S."/>
            <person name="Borkova D."/>
            <person name="Botchan M.R."/>
            <person name="Bouck J."/>
            <person name="Brokstein P."/>
            <person name="Brottier P."/>
            <person name="Burtis K.C."/>
            <person name="Busam D.A."/>
            <person name="Butler H."/>
            <person name="Cadieu E."/>
            <person name="Center A."/>
            <person name="Chandra I."/>
            <person name="Cherry J.M."/>
            <person name="Cawley S."/>
            <person name="Dahlke C."/>
            <person name="Davenport L.B."/>
            <person name="Davies P."/>
            <person name="de Pablos B."/>
            <person name="Delcher A."/>
            <person name="Deng Z."/>
            <person name="Mays A.D."/>
            <person name="Dew I."/>
            <person name="Dietz S.M."/>
            <person name="Dodson K."/>
            <person name="Doup L.E."/>
            <person name="Downes M."/>
            <person name="Dugan-Rocha S."/>
            <person name="Dunkov B.C."/>
            <person name="Dunn P."/>
            <person name="Durbin K.J."/>
            <person name="Evangelista C.C."/>
            <person name="Ferraz C."/>
            <person name="Ferriera S."/>
            <person name="Fleischmann W."/>
            <person name="Fosler C."/>
            <person name="Gabrielian A.E."/>
            <person name="Garg N.S."/>
            <person name="Gelbart W.M."/>
            <person name="Glasser K."/>
            <person name="Glodek A."/>
            <person name="Gong F."/>
            <person name="Gorrell J.H."/>
            <person name="Gu Z."/>
            <person name="Guan P."/>
            <person name="Harris M."/>
            <person name="Harris N.L."/>
            <person name="Harvey D.A."/>
            <person name="Heiman T.J."/>
            <person name="Hernandez J.R."/>
            <person name="Houck J."/>
            <person name="Hostin D."/>
            <person name="Houston K.A."/>
            <person name="Howland T.J."/>
            <person name="Wei M.-H."/>
            <person name="Ibegwam C."/>
            <person name="Jalali M."/>
            <person name="Kalush F."/>
            <person name="Karpen G.H."/>
            <person name="Ke Z."/>
            <person name="Kennison J.A."/>
            <person name="Ketchum K.A."/>
            <person name="Kimmel B.E."/>
            <person name="Kodira C.D."/>
            <person name="Kraft C.L."/>
            <person name="Kravitz S."/>
            <person name="Kulp D."/>
            <person name="Lai Z."/>
            <person name="Lasko P."/>
            <person name="Lei Y."/>
            <person name="Levitsky A.A."/>
            <person name="Li J.H."/>
            <person name="Li Z."/>
            <person name="Liang Y."/>
            <person name="Lin X."/>
            <person name="Liu X."/>
            <person name="Mattei B."/>
            <person name="McIntosh T.C."/>
            <person name="McLeod M.P."/>
            <person name="McPherson D."/>
            <person name="Merkulov G."/>
            <person name="Milshina N.V."/>
            <person name="Mobarry C."/>
            <person name="Morris J."/>
            <person name="Moshrefi A."/>
            <person name="Mount S.M."/>
            <person name="Moy M."/>
            <person name="Murphy B."/>
            <person name="Murphy L."/>
            <person name="Muzny D.M."/>
            <person name="Nelson D.L."/>
            <person name="Nelson D.R."/>
            <person name="Nelson K.A."/>
            <person name="Nixon K."/>
            <person name="Nusskern D.R."/>
            <person name="Pacleb J.M."/>
            <person name="Palazzolo M."/>
            <person name="Pittman G.S."/>
            <person name="Pan S."/>
            <person name="Pollard J."/>
            <person name="Puri V."/>
            <person name="Reese M.G."/>
            <person name="Reinert K."/>
            <person name="Remington K."/>
            <person name="Saunders R.D.C."/>
            <person name="Scheeler F."/>
            <person name="Shen H."/>
            <person name="Shue B.C."/>
            <person name="Siden-Kiamos I."/>
            <person name="Simpson M."/>
            <person name="Skupski M.P."/>
            <person name="Smith T.J."/>
            <person name="Spier E."/>
            <person name="Spradling A.C."/>
            <person name="Stapleton M."/>
            <person name="Strong R."/>
            <person name="Sun E."/>
            <person name="Svirskas R."/>
            <person name="Tector C."/>
            <person name="Turner R."/>
            <person name="Venter E."/>
            <person name="Wang A.H."/>
            <person name="Wang X."/>
            <person name="Wang Z.-Y."/>
            <person name="Wassarman D.A."/>
            <person name="Weinstock G.M."/>
            <person name="Weissenbach J."/>
            <person name="Williams S.M."/>
            <person name="Woodage T."/>
            <person name="Worley K.C."/>
            <person name="Wu D."/>
            <person name="Yang S."/>
            <person name="Yao Q.A."/>
            <person name="Ye J."/>
            <person name="Yeh R.-F."/>
            <person name="Zaveri J.S."/>
            <person name="Zhan M."/>
            <person name="Zhang G."/>
            <person name="Zhao Q."/>
            <person name="Zheng L."/>
            <person name="Zheng X.H."/>
            <person name="Zhong F.N."/>
            <person name="Zhong W."/>
            <person name="Zhou X."/>
            <person name="Zhu S.C."/>
            <person name="Zhu X."/>
            <person name="Smith H.O."/>
            <person name="Gibbs R.A."/>
            <person name="Myers E.W."/>
            <person name="Rubin G.M."/>
            <person name="Venter J.C."/>
        </authorList>
    </citation>
    <scope>NUCLEOTIDE SEQUENCE [LARGE SCALE GENOMIC DNA]</scope>
    <source>
        <strain>Berkeley</strain>
    </source>
</reference>
<reference key="3">
    <citation type="journal article" date="2002" name="Genome Biol.">
        <title>Annotation of the Drosophila melanogaster euchromatic genome: a systematic review.</title>
        <authorList>
            <person name="Misra S."/>
            <person name="Crosby M.A."/>
            <person name="Mungall C.J."/>
            <person name="Matthews B.B."/>
            <person name="Campbell K.S."/>
            <person name="Hradecky P."/>
            <person name="Huang Y."/>
            <person name="Kaminker J.S."/>
            <person name="Millburn G.H."/>
            <person name="Prochnik S.E."/>
            <person name="Smith C.D."/>
            <person name="Tupy J.L."/>
            <person name="Whitfield E.J."/>
            <person name="Bayraktaroglu L."/>
            <person name="Berman B.P."/>
            <person name="Bettencourt B.R."/>
            <person name="Celniker S.E."/>
            <person name="de Grey A.D.N.J."/>
            <person name="Drysdale R.A."/>
            <person name="Harris N.L."/>
            <person name="Richter J."/>
            <person name="Russo S."/>
            <person name="Schroeder A.J."/>
            <person name="Shu S.Q."/>
            <person name="Stapleton M."/>
            <person name="Yamada C."/>
            <person name="Ashburner M."/>
            <person name="Gelbart W.M."/>
            <person name="Rubin G.M."/>
            <person name="Lewis S.E."/>
        </authorList>
    </citation>
    <scope>GENOME REANNOTATION</scope>
    <scope>ALTERNATIVE SPLICING</scope>
    <source>
        <strain>Berkeley</strain>
    </source>
</reference>
<reference key="4">
    <citation type="submission" date="2007-03" db="EMBL/GenBank/DDBJ databases">
        <authorList>
            <person name="Stapleton M."/>
            <person name="Carlson J.W."/>
            <person name="Chavez C."/>
            <person name="Frise E."/>
            <person name="George R.A."/>
            <person name="Kapadia B."/>
            <person name="Pacleb J.M."/>
            <person name="Park S."/>
            <person name="Wan K.H."/>
            <person name="Yu C."/>
            <person name="Celniker S.E."/>
        </authorList>
    </citation>
    <scope>NUCLEOTIDE SEQUENCE [LARGE SCALE MRNA] (ISOFORMS C AND E)</scope>
    <source>
        <strain>Berkeley</strain>
        <tissue>Embryo</tissue>
    </source>
</reference>
<protein>
    <recommendedName>
        <fullName>Homeobox protein orthopedia</fullName>
    </recommendedName>
</protein>
<gene>
    <name type="primary">otp</name>
    <name type="ORF">CG10036</name>
</gene>
<feature type="chain" id="PRO_0000049206" description="Homeobox protein orthopedia">
    <location>
        <begin position="1"/>
        <end position="409"/>
    </location>
</feature>
<feature type="DNA-binding region" description="Homeobox" evidence="1">
    <location>
        <begin position="109"/>
        <end position="168"/>
    </location>
</feature>
<feature type="region of interest" description="Disordered" evidence="3">
    <location>
        <begin position="81"/>
        <end position="114"/>
    </location>
</feature>
<feature type="region of interest" description="Disordered" evidence="3">
    <location>
        <begin position="277"/>
        <end position="369"/>
    </location>
</feature>
<feature type="short sequence motif" description="OAR" evidence="2">
    <location>
        <begin position="372"/>
        <end position="385"/>
    </location>
</feature>
<feature type="compositionally biased region" description="Gly residues" evidence="3">
    <location>
        <begin position="81"/>
        <end position="90"/>
    </location>
</feature>
<feature type="compositionally biased region" description="Low complexity" evidence="3">
    <location>
        <begin position="91"/>
        <end position="103"/>
    </location>
</feature>
<feature type="compositionally biased region" description="Low complexity" evidence="3">
    <location>
        <begin position="277"/>
        <end position="291"/>
    </location>
</feature>
<feature type="compositionally biased region" description="Polar residues" evidence="3">
    <location>
        <begin position="306"/>
        <end position="315"/>
    </location>
</feature>
<feature type="compositionally biased region" description="Low complexity" evidence="3">
    <location>
        <begin position="319"/>
        <end position="338"/>
    </location>
</feature>
<feature type="compositionally biased region" description="Low complexity" evidence="3">
    <location>
        <begin position="350"/>
        <end position="364"/>
    </location>
</feature>
<feature type="splice variant" id="VSP_026420" description="In isoform C." evidence="5">
    <location>
        <begin position="1"/>
        <end position="96"/>
    </location>
</feature>
<feature type="splice variant" id="VSP_036997" description="In isoform C." evidence="5">
    <original>NGNNNNSMQQQD</original>
    <variation>MQQQDQHLDKNK</variation>
    <location>
        <begin position="97"/>
        <end position="108"/>
    </location>
</feature>
<feature type="splice variant" id="VSP_036998" description="In isoform C." evidence="5">
    <location>
        <begin position="223"/>
        <end position="264"/>
    </location>
</feature>
<proteinExistence type="evidence at transcript level"/>
<comment type="function">
    <text evidence="4">May be involved in the development of the central nervous system.</text>
</comment>
<comment type="subcellular location">
    <subcellularLocation>
        <location evidence="1 2">Nucleus</location>
    </subcellularLocation>
</comment>
<comment type="alternative products">
    <event type="alternative splicing"/>
    <isoform>
        <id>P56672-5</id>
        <name>E</name>
        <sequence type="displayed"/>
    </isoform>
    <isoform>
        <id>P56672-3</id>
        <name>C</name>
        <sequence type="described" ref="VSP_026420 VSP_036997 VSP_036998"/>
    </isoform>
</comment>
<comment type="tissue specificity">
    <text evidence="4">First appears at gastrulation in the ectodermal proctodeum and later in the hindgut, anal plate, and along the CNS.</text>
</comment>
<comment type="similarity">
    <text evidence="6">Belongs to the paired homeobox family. Bicoid subfamily.</text>
</comment>
<comment type="caution">
    <text evidence="6">It is uncertain whether Met-1 is the initiator or if the sequence starts further upstream.</text>
</comment>
<name>OTP_DROME</name>
<keyword id="KW-0025">Alternative splicing</keyword>
<keyword id="KW-0217">Developmental protein</keyword>
<keyword id="KW-0238">DNA-binding</keyword>
<keyword id="KW-0371">Homeobox</keyword>
<keyword id="KW-0539">Nucleus</keyword>
<keyword id="KW-1185">Reference proteome</keyword>
<sequence>MLNNLGANVLGPKDCDLPKAALTALHAGVNSFGQLPVGPNLADLGGGAGGGGSSGGVPVGGGVARLHISGGLCDNSNALNGGNGSSGNGNGNNNNGNGNNNNSMQQQDQKRHRTRFTPAQLNELERCFSKTHYPDIFMREEIAMRIGLTESRVQVWFQNRRAKWKKRKKTTNVFRTPGALLPSHGLPPFGANITNIAMGDGLCGTGMFGGDRWSVGVNPMTAGFGQLNQSSPLSSSLNSGLNSGINMGSALGAGSYQHYGLNALGDSMMYQHSVGGVSCGPSGSPSATTPPNMNSCSSVTPPPLSAQPNSSQNELNGEPMPLHQQQQQQTHQHQQQQTHQHHPMAPPTPTQQQQQLPQSMQSPSDGANDTLHSIAALRRRASELNAIPSYLQMAPHNYEHYNSNSNSVY</sequence>